<keyword id="KW-0067">ATP-binding</keyword>
<keyword id="KW-1003">Cell membrane</keyword>
<keyword id="KW-0472">Membrane</keyword>
<keyword id="KW-0547">Nucleotide-binding</keyword>
<keyword id="KW-0592">Phosphate transport</keyword>
<keyword id="KW-1278">Translocase</keyword>
<keyword id="KW-0813">Transport</keyword>
<organism>
    <name type="scientific">Streptomyces griseus</name>
    <dbReference type="NCBI Taxonomy" id="1911"/>
    <lineage>
        <taxon>Bacteria</taxon>
        <taxon>Bacillati</taxon>
        <taxon>Actinomycetota</taxon>
        <taxon>Actinomycetes</taxon>
        <taxon>Kitasatosporales</taxon>
        <taxon>Streptomycetaceae</taxon>
        <taxon>Streptomyces</taxon>
    </lineage>
</organism>
<sequence length="258" mass="28369">MAKRIDISGLSAFYGNHKAIEDISMTVEPRSVTAFIGPSGCGKSTFLRTLNRMHEVTPGGRVEGKVLLDDENLYDSNVDPVTVRRTVGMVFQRPNPFPTMSIFDNVAAGLRLNGSYRKSELNDVVEKSLRGANLWNEVKDRLNKPGSGLSGGQQQRLCIARAIAVEPQVLLMDEPCSALDPISTLAIEDLIGELKERFTIVIVTHNMQQAARVSDRTAFFNLAAVGKPGRLIEIDETERIFSNPSVQATEDYISGRFG</sequence>
<feature type="chain" id="PRO_0000092894" description="Phosphate import ATP-binding protein PstB">
    <location>
        <begin position="1"/>
        <end position="258"/>
    </location>
</feature>
<feature type="domain" description="ABC transporter" evidence="1">
    <location>
        <begin position="5"/>
        <end position="247"/>
    </location>
</feature>
<feature type="binding site" evidence="1">
    <location>
        <begin position="37"/>
        <end position="44"/>
    </location>
    <ligand>
        <name>ATP</name>
        <dbReference type="ChEBI" id="CHEBI:30616"/>
    </ligand>
</feature>
<comment type="function">
    <text evidence="1">Part of the ABC transporter complex PstSACB involved in phosphate import. Responsible for energy coupling to the transport system.</text>
</comment>
<comment type="catalytic activity">
    <reaction evidence="1">
        <text>phosphate(out) + ATP + H2O = ADP + 2 phosphate(in) + H(+)</text>
        <dbReference type="Rhea" id="RHEA:24440"/>
        <dbReference type="ChEBI" id="CHEBI:15377"/>
        <dbReference type="ChEBI" id="CHEBI:15378"/>
        <dbReference type="ChEBI" id="CHEBI:30616"/>
        <dbReference type="ChEBI" id="CHEBI:43474"/>
        <dbReference type="ChEBI" id="CHEBI:456216"/>
        <dbReference type="EC" id="7.3.2.1"/>
    </reaction>
</comment>
<comment type="subunit">
    <text evidence="1">The complex is composed of two ATP-binding proteins (PstB), two transmembrane proteins (PstC and PstA) and a solute-binding protein (PstS).</text>
</comment>
<comment type="subcellular location">
    <subcellularLocation>
        <location evidence="1">Cell membrane</location>
        <topology evidence="1">Peripheral membrane protein</topology>
    </subcellularLocation>
</comment>
<comment type="similarity">
    <text evidence="1">Belongs to the ABC transporter superfamily. Phosphate importer (TC 3.A.1.7) family.</text>
</comment>
<proteinExistence type="inferred from homology"/>
<evidence type="ECO:0000255" key="1">
    <source>
        <dbReference type="HAMAP-Rule" id="MF_01702"/>
    </source>
</evidence>
<gene>
    <name evidence="1" type="primary">pstB</name>
</gene>
<protein>
    <recommendedName>
        <fullName evidence="1">Phosphate import ATP-binding protein PstB</fullName>
        <ecNumber evidence="1">7.3.2.1</ecNumber>
    </recommendedName>
    <alternativeName>
        <fullName evidence="1">ABC phosphate transporter</fullName>
    </alternativeName>
    <alternativeName>
        <fullName evidence="1">Phosphate-transporting ATPase</fullName>
    </alternativeName>
</protein>
<accession>Q9EUS2</accession>
<reference key="1">
    <citation type="submission" date="2000-06" db="EMBL/GenBank/DDBJ databases">
        <title>Characterization of a membrane protein participating in the in-vitro formation of macrotetrolides from nonactinic acid and genes coding for a putative phosphate uptake system from Streptomyces griseus.</title>
        <authorList>
            <person name="Siekmoeller J."/>
            <person name="Fuechtenbusch B."/>
            <person name="Wittchen K.D."/>
            <person name="Kranz C."/>
            <person name="Pape H."/>
        </authorList>
    </citation>
    <scope>NUCLEOTIDE SEQUENCE [GENOMIC DNA]</scope>
    <source>
        <strain>DSM 40695 / ETH 7796 / Tue 10</strain>
    </source>
</reference>
<name>PSTB_STRGR</name>
<dbReference type="EC" id="7.3.2.1" evidence="1"/>
<dbReference type="EMBL" id="AJ243674">
    <property type="protein sequence ID" value="CAC21105.1"/>
    <property type="molecule type" value="Genomic_DNA"/>
</dbReference>
<dbReference type="SMR" id="Q9EUS2"/>
<dbReference type="STRING" id="1911.GCA_001715295_02635"/>
<dbReference type="GO" id="GO:0005886">
    <property type="term" value="C:plasma membrane"/>
    <property type="evidence" value="ECO:0007669"/>
    <property type="project" value="UniProtKB-SubCell"/>
</dbReference>
<dbReference type="GO" id="GO:0005524">
    <property type="term" value="F:ATP binding"/>
    <property type="evidence" value="ECO:0007669"/>
    <property type="project" value="UniProtKB-KW"/>
</dbReference>
<dbReference type="GO" id="GO:0016887">
    <property type="term" value="F:ATP hydrolysis activity"/>
    <property type="evidence" value="ECO:0007669"/>
    <property type="project" value="InterPro"/>
</dbReference>
<dbReference type="GO" id="GO:0015415">
    <property type="term" value="F:ATPase-coupled phosphate ion transmembrane transporter activity"/>
    <property type="evidence" value="ECO:0007669"/>
    <property type="project" value="UniProtKB-EC"/>
</dbReference>
<dbReference type="GO" id="GO:0035435">
    <property type="term" value="P:phosphate ion transmembrane transport"/>
    <property type="evidence" value="ECO:0007669"/>
    <property type="project" value="InterPro"/>
</dbReference>
<dbReference type="CDD" id="cd03260">
    <property type="entry name" value="ABC_PstB_phosphate_transporter"/>
    <property type="match status" value="1"/>
</dbReference>
<dbReference type="Gene3D" id="3.40.50.300">
    <property type="entry name" value="P-loop containing nucleotide triphosphate hydrolases"/>
    <property type="match status" value="1"/>
</dbReference>
<dbReference type="InterPro" id="IPR003593">
    <property type="entry name" value="AAA+_ATPase"/>
</dbReference>
<dbReference type="InterPro" id="IPR003439">
    <property type="entry name" value="ABC_transporter-like_ATP-bd"/>
</dbReference>
<dbReference type="InterPro" id="IPR017871">
    <property type="entry name" value="ABC_transporter-like_CS"/>
</dbReference>
<dbReference type="InterPro" id="IPR027417">
    <property type="entry name" value="P-loop_NTPase"/>
</dbReference>
<dbReference type="InterPro" id="IPR005670">
    <property type="entry name" value="PstB-like"/>
</dbReference>
<dbReference type="NCBIfam" id="TIGR00972">
    <property type="entry name" value="3a0107s01c2"/>
    <property type="match status" value="1"/>
</dbReference>
<dbReference type="PANTHER" id="PTHR43423">
    <property type="entry name" value="ABC TRANSPORTER I FAMILY MEMBER 17"/>
    <property type="match status" value="1"/>
</dbReference>
<dbReference type="PANTHER" id="PTHR43423:SF1">
    <property type="entry name" value="ABC TRANSPORTER I FAMILY MEMBER 17"/>
    <property type="match status" value="1"/>
</dbReference>
<dbReference type="Pfam" id="PF00005">
    <property type="entry name" value="ABC_tran"/>
    <property type="match status" value="1"/>
</dbReference>
<dbReference type="SMART" id="SM00382">
    <property type="entry name" value="AAA"/>
    <property type="match status" value="1"/>
</dbReference>
<dbReference type="SUPFAM" id="SSF52540">
    <property type="entry name" value="P-loop containing nucleoside triphosphate hydrolases"/>
    <property type="match status" value="1"/>
</dbReference>
<dbReference type="PROSITE" id="PS00211">
    <property type="entry name" value="ABC_TRANSPORTER_1"/>
    <property type="match status" value="1"/>
</dbReference>
<dbReference type="PROSITE" id="PS50893">
    <property type="entry name" value="ABC_TRANSPORTER_2"/>
    <property type="match status" value="1"/>
</dbReference>
<dbReference type="PROSITE" id="PS51238">
    <property type="entry name" value="PSTB"/>
    <property type="match status" value="1"/>
</dbReference>